<evidence type="ECO:0000250" key="1"/>
<evidence type="ECO:0000255" key="2">
    <source>
        <dbReference type="PROSITE-ProRule" id="PRU00088"/>
    </source>
</evidence>
<evidence type="ECO:0000305" key="3"/>
<sequence length="575" mass="63749">MTIATSSRPRDVQVADIGEHTLILRSRTWERLKFEVEYSRQRGTTANSYLIQADKKALIDPPGESFTAIYLEQLAQYLDFTTLDYIILGHVNPNRRVTLQELLSKAPQATLICSRPAANALKTAFPEWESRIQAVRFEDILDLGQGHQLTFVTAPTPRWPDGLFTYDSATKILYTDKFFGAHICEDTLFDEDWKKLDAERHYYFDCLHAPQAKQVEAALDKVVMLGARSYAPGHGPVVRYSLSRFTYDYRQWCQGQKSQDLNVALLYTSAYGNTGILANAIAQGLVQNDVNVQSVNCELADTAEITRIVEACDGIIIGSPTLGGHAPTQIQTALGIVLSTAAKTKLAGVFGSYGWSGEAIDLIESKLKDANYRLGFDTIRVRFSPTPEILQQCQAAGATFAQTLKKNKKLRTPRQVIPEAKIDRTEQAVGRIIGSLCVVTTRDQESHKGILTSWVSQATFNPPGIMMAIAQEQNADLMSHTGDQFVLNILKEGRNVRRYFSRQSTLGDNPFANLKTKTADNGCLILTEALAYLECTVTNQLECGDRLLIYAVVDKGEVLANDGVTAVEHRKSGSH</sequence>
<keyword id="KW-0249">Electron transport</keyword>
<keyword id="KW-0560">Oxidoreductase</keyword>
<keyword id="KW-1185">Reference proteome</keyword>
<keyword id="KW-0813">Transport</keyword>
<dbReference type="EC" id="1.-.-.-"/>
<dbReference type="EMBL" id="BA000019">
    <property type="protein sequence ID" value="BAB76143.1"/>
    <property type="molecule type" value="Genomic_DNA"/>
</dbReference>
<dbReference type="PIR" id="AD2361">
    <property type="entry name" value="AD2361"/>
</dbReference>
<dbReference type="RefSeq" id="WP_010998577.1">
    <property type="nucleotide sequence ID" value="NZ_RSCN01000054.1"/>
</dbReference>
<dbReference type="SMR" id="Q8YNW7"/>
<dbReference type="STRING" id="103690.gene:10496493"/>
<dbReference type="KEGG" id="ana:all4444"/>
<dbReference type="eggNOG" id="COG0426">
    <property type="taxonomic scope" value="Bacteria"/>
</dbReference>
<dbReference type="eggNOG" id="COG1853">
    <property type="taxonomic scope" value="Bacteria"/>
</dbReference>
<dbReference type="OrthoDB" id="9807946at2"/>
<dbReference type="Proteomes" id="UP000002483">
    <property type="component" value="Chromosome"/>
</dbReference>
<dbReference type="GO" id="GO:0009055">
    <property type="term" value="F:electron transfer activity"/>
    <property type="evidence" value="ECO:0007669"/>
    <property type="project" value="InterPro"/>
</dbReference>
<dbReference type="GO" id="GO:0010181">
    <property type="term" value="F:FMN binding"/>
    <property type="evidence" value="ECO:0007669"/>
    <property type="project" value="InterPro"/>
</dbReference>
<dbReference type="GO" id="GO:0016646">
    <property type="term" value="F:oxidoreductase activity, acting on the CH-NH group of donors, NAD or NADP as acceptor"/>
    <property type="evidence" value="ECO:0007669"/>
    <property type="project" value="UniProtKB-ARBA"/>
</dbReference>
<dbReference type="CDD" id="cd07709">
    <property type="entry name" value="flavodiiron_proteins_MBL-fold"/>
    <property type="match status" value="1"/>
</dbReference>
<dbReference type="Gene3D" id="3.40.50.360">
    <property type="match status" value="1"/>
</dbReference>
<dbReference type="Gene3D" id="2.30.110.10">
    <property type="entry name" value="Electron Transport, Fmn-binding Protein, Chain A"/>
    <property type="match status" value="1"/>
</dbReference>
<dbReference type="Gene3D" id="3.60.15.10">
    <property type="entry name" value="Ribonuclease Z/Hydroxyacylglutathione hydrolase-like"/>
    <property type="match status" value="1"/>
</dbReference>
<dbReference type="InterPro" id="IPR002563">
    <property type="entry name" value="Flavin_Rdtase-like_dom"/>
</dbReference>
<dbReference type="InterPro" id="IPR008254">
    <property type="entry name" value="Flavodoxin/NO_synth"/>
</dbReference>
<dbReference type="InterPro" id="IPR001226">
    <property type="entry name" value="Flavodoxin_CS"/>
</dbReference>
<dbReference type="InterPro" id="IPR029039">
    <property type="entry name" value="Flavoprotein-like_sf"/>
</dbReference>
<dbReference type="InterPro" id="IPR001279">
    <property type="entry name" value="Metallo-B-lactamas"/>
</dbReference>
<dbReference type="InterPro" id="IPR051285">
    <property type="entry name" value="NADH_oxidoreductase_modular"/>
</dbReference>
<dbReference type="InterPro" id="IPR045761">
    <property type="entry name" value="ODP_dom"/>
</dbReference>
<dbReference type="InterPro" id="IPR036866">
    <property type="entry name" value="RibonucZ/Hydroxyglut_hydro"/>
</dbReference>
<dbReference type="InterPro" id="IPR012349">
    <property type="entry name" value="Split_barrel_FMN-bd"/>
</dbReference>
<dbReference type="PANTHER" id="PTHR32145">
    <property type="entry name" value="DIFLAVIN FLAVOPROTEIN A 2-RELATED"/>
    <property type="match status" value="1"/>
</dbReference>
<dbReference type="PANTHER" id="PTHR32145:SF32">
    <property type="entry name" value="DIFLAVIN FLAVOPROTEIN A 4-RELATED"/>
    <property type="match status" value="1"/>
</dbReference>
<dbReference type="Pfam" id="PF01613">
    <property type="entry name" value="Flavin_Reduct"/>
    <property type="match status" value="1"/>
</dbReference>
<dbReference type="Pfam" id="PF00258">
    <property type="entry name" value="Flavodoxin_1"/>
    <property type="match status" value="1"/>
</dbReference>
<dbReference type="Pfam" id="PF19583">
    <property type="entry name" value="ODP"/>
    <property type="match status" value="1"/>
</dbReference>
<dbReference type="SMART" id="SM00903">
    <property type="entry name" value="Flavin_Reduct"/>
    <property type="match status" value="1"/>
</dbReference>
<dbReference type="SMART" id="SM00849">
    <property type="entry name" value="Lactamase_B"/>
    <property type="match status" value="1"/>
</dbReference>
<dbReference type="SUPFAM" id="SSF52218">
    <property type="entry name" value="Flavoproteins"/>
    <property type="match status" value="1"/>
</dbReference>
<dbReference type="SUPFAM" id="SSF50475">
    <property type="entry name" value="FMN-binding split barrel"/>
    <property type="match status" value="1"/>
</dbReference>
<dbReference type="SUPFAM" id="SSF56281">
    <property type="entry name" value="Metallo-hydrolase/oxidoreductase"/>
    <property type="match status" value="1"/>
</dbReference>
<dbReference type="PROSITE" id="PS00201">
    <property type="entry name" value="FLAVODOXIN"/>
    <property type="match status" value="1"/>
</dbReference>
<dbReference type="PROSITE" id="PS50902">
    <property type="entry name" value="FLAVODOXIN_LIKE"/>
    <property type="match status" value="1"/>
</dbReference>
<accession>Q8YNW7</accession>
<proteinExistence type="inferred from homology"/>
<organism>
    <name type="scientific">Nostoc sp. (strain PCC 7120 / SAG 25.82 / UTEX 2576)</name>
    <dbReference type="NCBI Taxonomy" id="103690"/>
    <lineage>
        <taxon>Bacteria</taxon>
        <taxon>Bacillati</taxon>
        <taxon>Cyanobacteriota</taxon>
        <taxon>Cyanophyceae</taxon>
        <taxon>Nostocales</taxon>
        <taxon>Nostocaceae</taxon>
        <taxon>Nostoc</taxon>
    </lineage>
</organism>
<protein>
    <recommendedName>
        <fullName>Putative diflavin flavoprotein A 4</fullName>
        <ecNumber>1.-.-.-</ecNumber>
    </recommendedName>
</protein>
<reference key="1">
    <citation type="journal article" date="2001" name="DNA Res.">
        <title>Complete genomic sequence of the filamentous nitrogen-fixing cyanobacterium Anabaena sp. strain PCC 7120.</title>
        <authorList>
            <person name="Kaneko T."/>
            <person name="Nakamura Y."/>
            <person name="Wolk C.P."/>
            <person name="Kuritz T."/>
            <person name="Sasamoto S."/>
            <person name="Watanabe A."/>
            <person name="Iriguchi M."/>
            <person name="Ishikawa A."/>
            <person name="Kawashima K."/>
            <person name="Kimura T."/>
            <person name="Kishida Y."/>
            <person name="Kohara M."/>
            <person name="Matsumoto M."/>
            <person name="Matsuno A."/>
            <person name="Muraki A."/>
            <person name="Nakazaki N."/>
            <person name="Shimpo S."/>
            <person name="Sugimoto M."/>
            <person name="Takazawa M."/>
            <person name="Yamada M."/>
            <person name="Yasuda M."/>
            <person name="Tabata S."/>
        </authorList>
    </citation>
    <scope>NUCLEOTIDE SEQUENCE [LARGE SCALE GENOMIC DNA]</scope>
    <source>
        <strain>PCC 7120 / SAG 25.82 / UTEX 2576</strain>
    </source>
</reference>
<gene>
    <name type="primary">dfa4</name>
    <name type="ordered locus">all4444</name>
</gene>
<feature type="chain" id="PRO_0000216796" description="Putative diflavin flavoprotein A 4">
    <location>
        <begin position="1"/>
        <end position="575"/>
    </location>
</feature>
<feature type="domain" description="Flavodoxin-like" evidence="2">
    <location>
        <begin position="263"/>
        <end position="405"/>
    </location>
</feature>
<feature type="region of interest" description="Zinc metallo-hydrolase">
    <location>
        <begin position="41"/>
        <end position="234"/>
    </location>
</feature>
<feature type="region of interest" description="Flavodoxin-reductase-like">
    <location>
        <begin position="429"/>
        <end position="575"/>
    </location>
</feature>
<name>DFA4_NOSS1</name>
<comment type="function">
    <text evidence="1">Mediates electron transfer from NADH to oxygen, reducing it to water. This modular protein has 3 redox cofactors, in other organisms the same activity requires 2 or 3 proteins (By similarity).</text>
</comment>
<comment type="cofactor">
    <cofactor>
        <name>Fe cation</name>
        <dbReference type="ChEBI" id="CHEBI:24875"/>
    </cofactor>
    <text>Binds 2 iron ions per subunit.</text>
</comment>
<comment type="miscellaneous">
    <text evidence="1">By homology with NorV in E.coli, may be involved in nitric oxide detoxification.</text>
</comment>
<comment type="similarity">
    <text evidence="3">In the N-terminal section; belongs to the zinc metallo-hydrolase group 3 family.</text>
</comment>
<comment type="similarity">
    <text evidence="3">In the C-terminal section; belongs to the flavodoxin reductase family.</text>
</comment>